<gene>
    <name evidence="1" type="primary">Cirl</name>
    <name type="ORF">GG23370</name>
</gene>
<evidence type="ECO:0000250" key="1">
    <source>
        <dbReference type="UniProtKB" id="A1Z7G7"/>
    </source>
</evidence>
<evidence type="ECO:0000250" key="2">
    <source>
        <dbReference type="UniProtKB" id="O88923"/>
    </source>
</evidence>
<evidence type="ECO:0000255" key="3"/>
<evidence type="ECO:0000255" key="4">
    <source>
        <dbReference type="PROSITE-ProRule" id="PRU00098"/>
    </source>
</evidence>
<evidence type="ECO:0000255" key="5">
    <source>
        <dbReference type="PROSITE-ProRule" id="PRU00260"/>
    </source>
</evidence>
<evidence type="ECO:0000256" key="6">
    <source>
        <dbReference type="SAM" id="MobiDB-lite"/>
    </source>
</evidence>
<evidence type="ECO:0000312" key="7">
    <source>
        <dbReference type="EMBL" id="EDV59498.1"/>
    </source>
</evidence>
<protein>
    <recommendedName>
        <fullName evidence="1">Latrophilin Cirl</fullName>
    </recommendedName>
</protein>
<name>LPHN_DROER</name>
<sequence>MLPTILSISYEHTYAYLSKYQTAYACEGKKLTIECEPGDVINLIRANYGRFSITICNDHGNVEWSVNCMFPKSLSVLNSRCAHKQSCGVLAATSMFGDPCPGTHKYLEAHYQCISAAQTSTTTNRPSPPPWVLSNGPPIFGNGSGLIHPPGIGAGAPPPPRLPTLPGVVGISGNPGLFNVPPQHTAVTHSTPSSSTTAMAGGRLKGVATSTTTTKHPAGRHDGLPPPPQLHHHHNHHGEDTASPTKPSSKLPAGGNATSPSNTRILTGVGGSGTDDGTLLTTKSSPNRTPGTAASGSVVPGNGSVVRTINNINLNSAGMSGGDDESKLFCGPTHARNLYWNMTRVGDVNVQPCPGGAAGIAKWRCVLMKRMPDSGYDEYDDDPSSTTPATSSADCLHNSSSCEPPVSMAHKVNQRLRNFEPTWHPTTPDLTQCRSLWLNNLEMRVNQRDSSLISIANDMSEVTSSKTLYGGDMLVTTKIIQTVSEKMLHDKETFPDQRQREAMIMELLHCVVKTGSNLLDESQLSSWLDLNPEDQMRVATSLLTGLEYNAFLLADTIIRERSVVQKVKNILLSVRVLETKTIQSSVVFPDSDQWPLSSDRIELPRAALIDNSEGGLVRIVFAAFDRLESILKPSYDHFDLKSSRSYVRNTAILSNDSDVNAGEIQQRLRILNSKVISASLGKGRHIQLSQPITLTLKHLKTENVTNPTCVFWNYIDHAWSANGCSLESTNRTHSVCSCNHLTNFAILMDVVDEHQHSLFTMFDGNMRIFIYISIGICVVFIVIALLTLKLFNGVFVKSARTSIYTSIYLCLLAIELLFLLGIEQTETSIFCGFITIFLHCAILSGTAWFCYEAFHSYSTLTSDELLLEVDQTPKVNCYYLLSYGLSLSVVAISLVIDPSTYTQNDYCVLMEANALFYATFVMPVLVFFVAAIGYTFLSWIIMCRKSRTGLKTKEHTRLASVRFDIRCSFVFLLLLSAVWCSAYFYLRGAKMDDDTADVYGYCFICFNTLLGLYIFVFHCIQNEKIRREYRKYVRQHAWLPKCLRCSKTSISSGIVTGNGPTAGTLCSVSTSKKPKLPIGVSEEAHDDPQQQQQTPVPITEDAIMGASSDCELNEAQQRRTLKSGLMTGTLQAPPQTLGGHVVLERGSTLRSTGHASPTSSAGSTHLIFAHKQQQQQQQQGPLGESYYHQPDYYSWKQPPTGTGGLKTPREYYNNTGAAASSPQQAHEVFYWTQKPNSGQHGKKKRGAGGVPASPSGSLHSRTAAASQVLFYPSYKKTKAGQPTGYPQYAEALDPPLATGNAAAYYQQQQQLRRQQLHLQQQQQQQQQLSSDEEQVEQHAHLLQLQRRAGSQQQLPAPPPHMAQYQQEFMQRQYRNKQSNCDLGMGDAYYNQGSVGGADGGPVYEEILSNRNSDVQHYEVGDFDVDEVYNNSVGTGVFNNMRAAVAAGGSRYGGGSLSGGSVSSRSQQQQLKKQQQQQSLAQQRSARRCTADDDDDEDEEEDEEATAAEQLHDSVCDEDEEEDESDLEDDAHGLPPQSDERMRRLMAMQDEDFKRRFQRQLRKHGAPLDYGALPPGAGPQPEHNGAVFGVSGGVGEGSKRGAFRQQQQALNAKSPGGRLAVNDLFGHGNSGPPLPPANQTPAQKRQQLQKLSPQSTTSSSSHTSHSNPNPHPHQLTHPHPHQHPPHHQQRHLSAMLDENNTVRCYLEPLAK</sequence>
<keyword id="KW-1003">Cell membrane</keyword>
<keyword id="KW-1015">Disulfide bond</keyword>
<keyword id="KW-0297">G-protein coupled receptor</keyword>
<keyword id="KW-0325">Glycoprotein</keyword>
<keyword id="KW-0430">Lectin</keyword>
<keyword id="KW-0472">Membrane</keyword>
<keyword id="KW-0597">Phosphoprotein</keyword>
<keyword id="KW-0675">Receptor</keyword>
<keyword id="KW-0807">Transducer</keyword>
<keyword id="KW-0812">Transmembrane</keyword>
<keyword id="KW-1133">Transmembrane helix</keyword>
<dbReference type="EMBL" id="CH954177">
    <property type="protein sequence ID" value="EDV59498.1"/>
    <property type="molecule type" value="Genomic_DNA"/>
</dbReference>
<dbReference type="RefSeq" id="XP_001970439.2">
    <property type="nucleotide sequence ID" value="XM_001970403.2"/>
</dbReference>
<dbReference type="SMR" id="B3N8M1"/>
<dbReference type="GlyCosmos" id="B3N8M1">
    <property type="glycosylation" value="8 sites, No reported glycans"/>
</dbReference>
<dbReference type="EnsemblMetazoa" id="XM_026979040.1">
    <property type="protein sequence ID" value="XP_026834841.1"/>
    <property type="gene ID" value="LOC6543186"/>
</dbReference>
<dbReference type="eggNOG" id="KOG4193">
    <property type="taxonomic scope" value="Eukaryota"/>
</dbReference>
<dbReference type="eggNOG" id="KOG4729">
    <property type="taxonomic scope" value="Eukaryota"/>
</dbReference>
<dbReference type="HOGENOM" id="CLU_003272_0_0_1"/>
<dbReference type="OMA" id="NMRVFIY"/>
<dbReference type="OrthoDB" id="6516634at2759"/>
<dbReference type="PhylomeDB" id="B3N8M1"/>
<dbReference type="ChiTaRS" id="Cirl">
    <property type="organism name" value="fly"/>
</dbReference>
<dbReference type="Proteomes" id="UP000008711">
    <property type="component" value="Unassembled WGS sequence"/>
</dbReference>
<dbReference type="GO" id="GO:0005886">
    <property type="term" value="C:plasma membrane"/>
    <property type="evidence" value="ECO:0007669"/>
    <property type="project" value="UniProtKB-SubCell"/>
</dbReference>
<dbReference type="GO" id="GO:0030246">
    <property type="term" value="F:carbohydrate binding"/>
    <property type="evidence" value="ECO:0007669"/>
    <property type="project" value="UniProtKB-KW"/>
</dbReference>
<dbReference type="GO" id="GO:0004930">
    <property type="term" value="F:G protein-coupled receptor activity"/>
    <property type="evidence" value="ECO:0007669"/>
    <property type="project" value="UniProtKB-KW"/>
</dbReference>
<dbReference type="GO" id="GO:0140897">
    <property type="term" value="F:mechanoreceptor activity"/>
    <property type="evidence" value="ECO:0007669"/>
    <property type="project" value="EnsemblMetazoa"/>
</dbReference>
<dbReference type="GO" id="GO:0008344">
    <property type="term" value="P:adult locomotory behavior"/>
    <property type="evidence" value="ECO:0007669"/>
    <property type="project" value="EnsemblMetazoa"/>
</dbReference>
<dbReference type="GO" id="GO:0007166">
    <property type="term" value="P:cell surface receptor signaling pathway"/>
    <property type="evidence" value="ECO:0007669"/>
    <property type="project" value="InterPro"/>
</dbReference>
<dbReference type="GO" id="GO:0019230">
    <property type="term" value="P:proprioception"/>
    <property type="evidence" value="ECO:0007669"/>
    <property type="project" value="EnsemblMetazoa"/>
</dbReference>
<dbReference type="CDD" id="cd15441">
    <property type="entry name" value="7tmB2_CELSR_Adhesion_IV"/>
    <property type="match status" value="1"/>
</dbReference>
<dbReference type="CDD" id="cd22830">
    <property type="entry name" value="Gal_Rha_Lectin_dCirl"/>
    <property type="match status" value="1"/>
</dbReference>
<dbReference type="FunFam" id="2.60.120.740:FF:000001">
    <property type="entry name" value="Adhesion G protein-coupled receptor L2"/>
    <property type="match status" value="1"/>
</dbReference>
<dbReference type="FunFam" id="1.20.1070.10:FF:000322">
    <property type="entry name" value="latrophilin Cirl isoform X2"/>
    <property type="match status" value="1"/>
</dbReference>
<dbReference type="FunFam" id="1.25.40.610:FF:000006">
    <property type="entry name" value="latrophilin Cirl isoform X2"/>
    <property type="match status" value="1"/>
</dbReference>
<dbReference type="FunFam" id="2.60.220.50:FF:000024">
    <property type="entry name" value="latrophilin Cirl isoform X2"/>
    <property type="match status" value="1"/>
</dbReference>
<dbReference type="Gene3D" id="1.25.40.610">
    <property type="match status" value="1"/>
</dbReference>
<dbReference type="Gene3D" id="2.60.120.740">
    <property type="match status" value="1"/>
</dbReference>
<dbReference type="Gene3D" id="2.60.220.50">
    <property type="match status" value="1"/>
</dbReference>
<dbReference type="Gene3D" id="4.10.1240.10">
    <property type="entry name" value="GPCR, family 2, extracellular hormone receptor domain"/>
    <property type="match status" value="1"/>
</dbReference>
<dbReference type="Gene3D" id="1.20.1070.10">
    <property type="entry name" value="Rhodopsin 7-helix transmembrane proteins"/>
    <property type="match status" value="1"/>
</dbReference>
<dbReference type="InterPro" id="IPR057244">
    <property type="entry name" value="GAIN_B"/>
</dbReference>
<dbReference type="InterPro" id="IPR032471">
    <property type="entry name" value="GAIN_dom_N"/>
</dbReference>
<dbReference type="InterPro" id="IPR046338">
    <property type="entry name" value="GAIN_dom_sf"/>
</dbReference>
<dbReference type="InterPro" id="IPR017981">
    <property type="entry name" value="GPCR_2-like_7TM"/>
</dbReference>
<dbReference type="InterPro" id="IPR036445">
    <property type="entry name" value="GPCR_2_extracell_dom_sf"/>
</dbReference>
<dbReference type="InterPro" id="IPR000832">
    <property type="entry name" value="GPCR_2_secretin-like"/>
</dbReference>
<dbReference type="InterPro" id="IPR000203">
    <property type="entry name" value="GPS"/>
</dbReference>
<dbReference type="InterPro" id="IPR000922">
    <property type="entry name" value="Lectin_gal-bd_dom"/>
</dbReference>
<dbReference type="InterPro" id="IPR043159">
    <property type="entry name" value="Lectin_gal-bd_sf"/>
</dbReference>
<dbReference type="PANTHER" id="PTHR12011">
    <property type="entry name" value="ADHESION G-PROTEIN COUPLED RECEPTOR"/>
    <property type="match status" value="1"/>
</dbReference>
<dbReference type="PANTHER" id="PTHR12011:SF475">
    <property type="entry name" value="LATROPHILIN CIRL"/>
    <property type="match status" value="1"/>
</dbReference>
<dbReference type="Pfam" id="PF00002">
    <property type="entry name" value="7tm_2"/>
    <property type="match status" value="1"/>
</dbReference>
<dbReference type="Pfam" id="PF16489">
    <property type="entry name" value="GAIN"/>
    <property type="match status" value="1"/>
</dbReference>
<dbReference type="Pfam" id="PF01825">
    <property type="entry name" value="GPS"/>
    <property type="match status" value="1"/>
</dbReference>
<dbReference type="Pfam" id="PF02140">
    <property type="entry name" value="SUEL_Lectin"/>
    <property type="match status" value="1"/>
</dbReference>
<dbReference type="SMART" id="SM00303">
    <property type="entry name" value="GPS"/>
    <property type="match status" value="1"/>
</dbReference>
<dbReference type="SUPFAM" id="SSF81321">
    <property type="entry name" value="Family A G protein-coupled receptor-like"/>
    <property type="match status" value="1"/>
</dbReference>
<dbReference type="PROSITE" id="PS50261">
    <property type="entry name" value="G_PROTEIN_RECEP_F2_4"/>
    <property type="match status" value="1"/>
</dbReference>
<dbReference type="PROSITE" id="PS50221">
    <property type="entry name" value="GAIN_B"/>
    <property type="match status" value="1"/>
</dbReference>
<dbReference type="PROSITE" id="PS50228">
    <property type="entry name" value="SUEL_LECTIN"/>
    <property type="match status" value="1"/>
</dbReference>
<organism>
    <name type="scientific">Drosophila erecta</name>
    <name type="common">Fruit fly</name>
    <dbReference type="NCBI Taxonomy" id="7220"/>
    <lineage>
        <taxon>Eukaryota</taxon>
        <taxon>Metazoa</taxon>
        <taxon>Ecdysozoa</taxon>
        <taxon>Arthropoda</taxon>
        <taxon>Hexapoda</taxon>
        <taxon>Insecta</taxon>
        <taxon>Pterygota</taxon>
        <taxon>Neoptera</taxon>
        <taxon>Endopterygota</taxon>
        <taxon>Diptera</taxon>
        <taxon>Brachycera</taxon>
        <taxon>Muscomorpha</taxon>
        <taxon>Ephydroidea</taxon>
        <taxon>Drosophilidae</taxon>
        <taxon>Drosophila</taxon>
        <taxon>Sophophora</taxon>
    </lineage>
</organism>
<proteinExistence type="inferred from homology"/>
<feature type="chain" id="PRO_0000393373" description="Latrophilin Cirl">
    <location>
        <begin position="1"/>
        <end position="1710"/>
    </location>
</feature>
<feature type="topological domain" description="Extracellular" evidence="3">
    <location>
        <begin position="1"/>
        <end position="767"/>
    </location>
</feature>
<feature type="transmembrane region" description="Helical; Name=1" evidence="3">
    <location>
        <begin position="768"/>
        <end position="788"/>
    </location>
</feature>
<feature type="topological domain" description="Cytoplasmic" evidence="3">
    <location>
        <begin position="789"/>
        <end position="801"/>
    </location>
</feature>
<feature type="transmembrane region" description="Helical; Name=2" evidence="3">
    <location>
        <begin position="802"/>
        <end position="822"/>
    </location>
</feature>
<feature type="topological domain" description="Extracellular" evidence="3">
    <location>
        <begin position="823"/>
        <end position="828"/>
    </location>
</feature>
<feature type="transmembrane region" description="Helical; Name=3" evidence="3">
    <location>
        <begin position="829"/>
        <end position="849"/>
    </location>
</feature>
<feature type="topological domain" description="Cytoplasmic" evidence="3">
    <location>
        <begin position="850"/>
        <end position="875"/>
    </location>
</feature>
<feature type="transmembrane region" description="Helical; Name=4" evidence="3">
    <location>
        <begin position="876"/>
        <end position="896"/>
    </location>
</feature>
<feature type="topological domain" description="Extracellular" evidence="3">
    <location>
        <begin position="897"/>
        <end position="920"/>
    </location>
</feature>
<feature type="transmembrane region" description="Helical; Name=5" evidence="3">
    <location>
        <begin position="921"/>
        <end position="941"/>
    </location>
</feature>
<feature type="topological domain" description="Cytoplasmic" evidence="3">
    <location>
        <begin position="942"/>
        <end position="968"/>
    </location>
</feature>
<feature type="transmembrane region" description="Helical; Name=6" evidence="3">
    <location>
        <begin position="969"/>
        <end position="989"/>
    </location>
</feature>
<feature type="topological domain" description="Extracellular" evidence="3">
    <location>
        <begin position="990"/>
        <end position="999"/>
    </location>
</feature>
<feature type="transmembrane region" description="Helical; Name=7" evidence="3">
    <location>
        <begin position="1000"/>
        <end position="1020"/>
    </location>
</feature>
<feature type="topological domain" description="Cytoplasmic" evidence="3">
    <location>
        <begin position="1021"/>
        <end position="1710"/>
    </location>
</feature>
<feature type="domain" description="SUEL-type lectin" evidence="5">
    <location>
        <begin position="25"/>
        <end position="114"/>
    </location>
</feature>
<feature type="domain" description="GAIN-B" evidence="4">
    <location>
        <begin position="561"/>
        <end position="754"/>
    </location>
</feature>
<feature type="region of interest" description="Disordered" evidence="6">
    <location>
        <begin position="183"/>
        <end position="304"/>
    </location>
</feature>
<feature type="region of interest" description="Disordered" evidence="6">
    <location>
        <begin position="376"/>
        <end position="400"/>
    </location>
</feature>
<feature type="region of interest" description="GPS" evidence="4">
    <location>
        <begin position="709"/>
        <end position="754"/>
    </location>
</feature>
<feature type="region of interest" description="Disordered" evidence="6">
    <location>
        <begin position="1234"/>
        <end position="1259"/>
    </location>
</feature>
<feature type="region of interest" description="Disordered" evidence="6">
    <location>
        <begin position="1452"/>
        <end position="1540"/>
    </location>
</feature>
<feature type="region of interest" description="Disordered" evidence="6">
    <location>
        <begin position="1568"/>
        <end position="1690"/>
    </location>
</feature>
<feature type="compositionally biased region" description="Polar residues" evidence="6">
    <location>
        <begin position="185"/>
        <end position="198"/>
    </location>
</feature>
<feature type="compositionally biased region" description="Polar residues" evidence="6">
    <location>
        <begin position="256"/>
        <end position="265"/>
    </location>
</feature>
<feature type="compositionally biased region" description="Low complexity" evidence="6">
    <location>
        <begin position="275"/>
        <end position="285"/>
    </location>
</feature>
<feature type="compositionally biased region" description="Low complexity" evidence="6">
    <location>
        <begin position="295"/>
        <end position="304"/>
    </location>
</feature>
<feature type="compositionally biased region" description="Low complexity" evidence="6">
    <location>
        <begin position="384"/>
        <end position="394"/>
    </location>
</feature>
<feature type="compositionally biased region" description="Low complexity" evidence="6">
    <location>
        <begin position="1458"/>
        <end position="1483"/>
    </location>
</feature>
<feature type="compositionally biased region" description="Acidic residues" evidence="6">
    <location>
        <begin position="1491"/>
        <end position="1505"/>
    </location>
</feature>
<feature type="compositionally biased region" description="Acidic residues" evidence="6">
    <location>
        <begin position="1515"/>
        <end position="1528"/>
    </location>
</feature>
<feature type="compositionally biased region" description="Polar residues" evidence="6">
    <location>
        <begin position="1638"/>
        <end position="1650"/>
    </location>
</feature>
<feature type="compositionally biased region" description="Low complexity" evidence="6">
    <location>
        <begin position="1651"/>
        <end position="1672"/>
    </location>
</feature>
<feature type="compositionally biased region" description="Basic residues" evidence="6">
    <location>
        <begin position="1673"/>
        <end position="1689"/>
    </location>
</feature>
<feature type="site" description="Cleavage; by autolysis" evidence="4">
    <location>
        <begin position="741"/>
        <end position="742"/>
    </location>
</feature>
<feature type="modified residue" description="Phosphoserine" evidence="1">
    <location>
        <position position="1156"/>
    </location>
</feature>
<feature type="modified residue" description="Phosphoserine" evidence="1">
    <location>
        <position position="1253"/>
    </location>
</feature>
<feature type="modified residue" description="Phosphoserine" evidence="1">
    <location>
        <position position="1260"/>
    </location>
</feature>
<feature type="modified residue" description="Phosphoserine" evidence="1">
    <location>
        <position position="1329"/>
    </location>
</feature>
<feature type="modified residue" description="Phosphoserine" evidence="1">
    <location>
        <position position="1330"/>
    </location>
</feature>
<feature type="glycosylation site" description="N-linked (GlcNAc...) asparagine" evidence="3">
    <location>
        <position position="142"/>
    </location>
</feature>
<feature type="glycosylation site" description="N-linked (GlcNAc...) asparagine" evidence="3">
    <location>
        <position position="256"/>
    </location>
</feature>
<feature type="glycosylation site" description="N-linked (GlcNAc...) asparagine" evidence="3">
    <location>
        <position position="302"/>
    </location>
</feature>
<feature type="glycosylation site" description="N-linked (GlcNAc...) asparagine" evidence="3">
    <location>
        <position position="341"/>
    </location>
</feature>
<feature type="glycosylation site" description="N-linked (GlcNAc...) asparagine" evidence="3">
    <location>
        <position position="398"/>
    </location>
</feature>
<feature type="glycosylation site" description="N-linked (GlcNAc...) asparagine" evidence="3">
    <location>
        <position position="655"/>
    </location>
</feature>
<feature type="glycosylation site" description="N-linked (GlcNAc...) asparagine" evidence="3">
    <location>
        <position position="703"/>
    </location>
</feature>
<feature type="glycosylation site" description="N-linked (GlcNAc...) asparagine" evidence="3">
    <location>
        <position position="730"/>
    </location>
</feature>
<feature type="disulfide bond" evidence="4">
    <location>
        <begin position="709"/>
        <end position="736"/>
    </location>
</feature>
<feature type="disulfide bond" evidence="4">
    <location>
        <begin position="724"/>
        <end position="738"/>
    </location>
</feature>
<comment type="subunit">
    <text evidence="2">Forms a heterodimer, consisting of a large extracellular region non-covalently linked to a seven-transmembrane moiety.</text>
</comment>
<comment type="subcellular location">
    <subcellularLocation>
        <location evidence="3">Cell membrane</location>
        <topology evidence="2 3">Multi-pass membrane protein</topology>
    </subcellularLocation>
</comment>
<comment type="PTM">
    <text evidence="2">Proteolytically cleaved into 2 subunits, an extracellular subunit and a seven-transmembrane subunit.</text>
</comment>
<comment type="similarity">
    <text evidence="3">Belongs to the G-protein coupled receptor 2 family. LN-TM7 subfamily.</text>
</comment>
<accession>B3N8M1</accession>
<reference evidence="7" key="1">
    <citation type="journal article" date="2007" name="Nature">
        <title>Evolution of genes and genomes on the Drosophila phylogeny.</title>
        <authorList>
            <consortium name="Drosophila 12 genomes consortium"/>
        </authorList>
    </citation>
    <scope>NUCLEOTIDE SEQUENCE [LARGE SCALE GENOMIC DNA]</scope>
    <source>
        <strain evidence="7">Tucson 14021-0224.01</strain>
    </source>
</reference>